<gene>
    <name type="primary">sodA</name>
    <name type="ORF">AN0241</name>
</gene>
<dbReference type="EC" id="1.15.1.1" evidence="3"/>
<dbReference type="EMBL" id="AF305546">
    <property type="protein sequence ID" value="AAG40775.1"/>
    <property type="molecule type" value="mRNA"/>
</dbReference>
<dbReference type="EMBL" id="AF281058">
    <property type="protein sequence ID" value="AAL38992.1"/>
    <property type="molecule type" value="Genomic_DNA"/>
</dbReference>
<dbReference type="EMBL" id="AF281060">
    <property type="protein sequence ID" value="AAL38994.1"/>
    <property type="molecule type" value="mRNA"/>
</dbReference>
<dbReference type="EMBL" id="AACD01000005">
    <property type="protein sequence ID" value="EAA66114.1"/>
    <property type="status" value="ALT_SEQ"/>
    <property type="molecule type" value="Genomic_DNA"/>
</dbReference>
<dbReference type="EMBL" id="BN001308">
    <property type="protein sequence ID" value="CBF89897.1"/>
    <property type="molecule type" value="Genomic_DNA"/>
</dbReference>
<dbReference type="RefSeq" id="XP_657845.1">
    <property type="nucleotide sequence ID" value="XM_652753.1"/>
</dbReference>
<dbReference type="SMR" id="Q9HEY7"/>
<dbReference type="BioGRID" id="1956792">
    <property type="interactions" value="1"/>
</dbReference>
<dbReference type="FunCoup" id="Q9HEY7">
    <property type="interactions" value="784"/>
</dbReference>
<dbReference type="STRING" id="227321.Q9HEY7"/>
<dbReference type="EnsemblFungi" id="CBF89897">
    <property type="protein sequence ID" value="CBF89897"/>
    <property type="gene ID" value="ANIA_00241"/>
</dbReference>
<dbReference type="VEuPathDB" id="FungiDB:AN0241"/>
<dbReference type="eggNOG" id="KOG0441">
    <property type="taxonomic scope" value="Eukaryota"/>
</dbReference>
<dbReference type="HOGENOM" id="CLU_056632_4_1_1"/>
<dbReference type="InParanoid" id="Q9HEY7"/>
<dbReference type="OMA" id="AQRGFHI"/>
<dbReference type="OrthoDB" id="2015551at2759"/>
<dbReference type="Proteomes" id="UP000000560">
    <property type="component" value="Chromosome VIII"/>
</dbReference>
<dbReference type="GO" id="GO:0005829">
    <property type="term" value="C:cytosol"/>
    <property type="evidence" value="ECO:0007669"/>
    <property type="project" value="EnsemblFungi"/>
</dbReference>
<dbReference type="GO" id="GO:0005576">
    <property type="term" value="C:extracellular region"/>
    <property type="evidence" value="ECO:0000314"/>
    <property type="project" value="AspGD"/>
</dbReference>
<dbReference type="GO" id="GO:0005758">
    <property type="term" value="C:mitochondrial intermembrane space"/>
    <property type="evidence" value="ECO:0007669"/>
    <property type="project" value="EnsemblFungi"/>
</dbReference>
<dbReference type="GO" id="GO:0005634">
    <property type="term" value="C:nucleus"/>
    <property type="evidence" value="ECO:0007669"/>
    <property type="project" value="EnsemblFungi"/>
</dbReference>
<dbReference type="GO" id="GO:1902693">
    <property type="term" value="C:superoxide dismutase complex"/>
    <property type="evidence" value="ECO:0007669"/>
    <property type="project" value="EnsemblFungi"/>
</dbReference>
<dbReference type="GO" id="GO:0005507">
    <property type="term" value="F:copper ion binding"/>
    <property type="evidence" value="ECO:0000318"/>
    <property type="project" value="GO_Central"/>
</dbReference>
<dbReference type="GO" id="GO:0016670">
    <property type="term" value="F:oxidoreductase activity, acting on a sulfur group of donors, oxygen as acceptor"/>
    <property type="evidence" value="ECO:0007669"/>
    <property type="project" value="EnsemblFungi"/>
</dbReference>
<dbReference type="GO" id="GO:0004784">
    <property type="term" value="F:superoxide dismutase activity"/>
    <property type="evidence" value="ECO:0000250"/>
    <property type="project" value="AspGD"/>
</dbReference>
<dbReference type="GO" id="GO:0045454">
    <property type="term" value="P:cell redox homeostasis"/>
    <property type="evidence" value="ECO:0007669"/>
    <property type="project" value="EnsemblFungi"/>
</dbReference>
<dbReference type="GO" id="GO:0010106">
    <property type="term" value="P:cellular response to iron ion starvation"/>
    <property type="evidence" value="ECO:0000270"/>
    <property type="project" value="AspGD"/>
</dbReference>
<dbReference type="GO" id="GO:0034599">
    <property type="term" value="P:cellular response to oxidative stress"/>
    <property type="evidence" value="ECO:0000270"/>
    <property type="project" value="AspGD"/>
</dbReference>
<dbReference type="GO" id="GO:0006825">
    <property type="term" value="P:copper ion transport"/>
    <property type="evidence" value="ECO:0007669"/>
    <property type="project" value="EnsemblFungi"/>
</dbReference>
<dbReference type="GO" id="GO:0031505">
    <property type="term" value="P:fungal-type cell wall organization"/>
    <property type="evidence" value="ECO:0007669"/>
    <property type="project" value="EnsemblFungi"/>
</dbReference>
<dbReference type="GO" id="GO:0006878">
    <property type="term" value="P:intracellular copper ion homeostasis"/>
    <property type="evidence" value="ECO:0007669"/>
    <property type="project" value="EnsemblFungi"/>
</dbReference>
<dbReference type="GO" id="GO:0006882">
    <property type="term" value="P:intracellular zinc ion homeostasis"/>
    <property type="evidence" value="ECO:0007669"/>
    <property type="project" value="EnsemblFungi"/>
</dbReference>
<dbReference type="GO" id="GO:1901856">
    <property type="term" value="P:negative regulation of cellular respiration"/>
    <property type="evidence" value="ECO:0007669"/>
    <property type="project" value="EnsemblFungi"/>
</dbReference>
<dbReference type="GO" id="GO:0045944">
    <property type="term" value="P:positive regulation of transcription by RNA polymerase II"/>
    <property type="evidence" value="ECO:0007669"/>
    <property type="project" value="EnsemblFungi"/>
</dbReference>
<dbReference type="GO" id="GO:0050821">
    <property type="term" value="P:protein stabilization"/>
    <property type="evidence" value="ECO:0007669"/>
    <property type="project" value="EnsemblFungi"/>
</dbReference>
<dbReference type="GO" id="GO:0019430">
    <property type="term" value="P:removal of superoxide radicals"/>
    <property type="evidence" value="ECO:0000318"/>
    <property type="project" value="GO_Central"/>
</dbReference>
<dbReference type="GO" id="GO:0006801">
    <property type="term" value="P:superoxide metabolic process"/>
    <property type="evidence" value="ECO:0000250"/>
    <property type="project" value="AspGD"/>
</dbReference>
<dbReference type="CDD" id="cd00305">
    <property type="entry name" value="Cu-Zn_Superoxide_Dismutase"/>
    <property type="match status" value="1"/>
</dbReference>
<dbReference type="FunFam" id="2.60.40.200:FF:000001">
    <property type="entry name" value="Superoxide dismutase [Cu-Zn]"/>
    <property type="match status" value="1"/>
</dbReference>
<dbReference type="Gene3D" id="2.60.40.200">
    <property type="entry name" value="Superoxide dismutase, copper/zinc binding domain"/>
    <property type="match status" value="1"/>
</dbReference>
<dbReference type="InterPro" id="IPR036423">
    <property type="entry name" value="SOD-like_Cu/Zn_dom_sf"/>
</dbReference>
<dbReference type="InterPro" id="IPR024134">
    <property type="entry name" value="SOD_Cu/Zn_/chaperone"/>
</dbReference>
<dbReference type="InterPro" id="IPR018152">
    <property type="entry name" value="SOD_Cu/Zn_BS"/>
</dbReference>
<dbReference type="InterPro" id="IPR001424">
    <property type="entry name" value="SOD_Cu_Zn_dom"/>
</dbReference>
<dbReference type="PANTHER" id="PTHR10003">
    <property type="entry name" value="SUPEROXIDE DISMUTASE CU-ZN -RELATED"/>
    <property type="match status" value="1"/>
</dbReference>
<dbReference type="Pfam" id="PF00080">
    <property type="entry name" value="Sod_Cu"/>
    <property type="match status" value="1"/>
</dbReference>
<dbReference type="PRINTS" id="PR00068">
    <property type="entry name" value="CUZNDISMTASE"/>
</dbReference>
<dbReference type="SUPFAM" id="SSF49329">
    <property type="entry name" value="Cu,Zn superoxide dismutase-like"/>
    <property type="match status" value="1"/>
</dbReference>
<dbReference type="PROSITE" id="PS00087">
    <property type="entry name" value="SOD_CU_ZN_1"/>
    <property type="match status" value="1"/>
</dbReference>
<dbReference type="PROSITE" id="PS00332">
    <property type="entry name" value="SOD_CU_ZN_2"/>
    <property type="match status" value="1"/>
</dbReference>
<reference key="1">
    <citation type="journal article" date="2000" name="FEBS Lett.">
        <title>Iron starvation leads to increased expression of Cu/Zn-superoxide dismutase in Aspergillus.</title>
        <authorList>
            <person name="Oberegger H."/>
            <person name="Zadra I."/>
            <person name="Schoeser M."/>
            <person name="Haas H."/>
        </authorList>
    </citation>
    <scope>NUCLEOTIDE SEQUENCE [MRNA]</scope>
</reference>
<reference key="2">
    <citation type="submission" date="2000-06" db="EMBL/GenBank/DDBJ databases">
        <title>Homogeneity in 3-dimensional structure of Cu,Zn superoxide dismutases of Aspergillus fumigatus, Aspergillus flavus and Aspergillus nidulans.</title>
        <authorList>
            <person name="Holdom M.D."/>
            <person name="Hobby P."/>
            <person name="Lechenne B."/>
            <person name="Zaugg C."/>
            <person name="Sutton B."/>
            <person name="Monod M."/>
            <person name="Hamilton A.J."/>
        </authorList>
    </citation>
    <scope>NUCLEOTIDE SEQUENCE [GENOMIC DNA / MRNA]</scope>
</reference>
<reference key="3">
    <citation type="journal article" date="2005" name="Nature">
        <title>Sequencing of Aspergillus nidulans and comparative analysis with A. fumigatus and A. oryzae.</title>
        <authorList>
            <person name="Galagan J.E."/>
            <person name="Calvo S.E."/>
            <person name="Cuomo C."/>
            <person name="Ma L.-J."/>
            <person name="Wortman J.R."/>
            <person name="Batzoglou S."/>
            <person name="Lee S.-I."/>
            <person name="Bastuerkmen M."/>
            <person name="Spevak C.C."/>
            <person name="Clutterbuck J."/>
            <person name="Kapitonov V."/>
            <person name="Jurka J."/>
            <person name="Scazzocchio C."/>
            <person name="Farman M.L."/>
            <person name="Butler J."/>
            <person name="Purcell S."/>
            <person name="Harris S."/>
            <person name="Braus G.H."/>
            <person name="Draht O."/>
            <person name="Busch S."/>
            <person name="D'Enfert C."/>
            <person name="Bouchier C."/>
            <person name="Goldman G.H."/>
            <person name="Bell-Pedersen D."/>
            <person name="Griffiths-Jones S."/>
            <person name="Doonan J.H."/>
            <person name="Yu J."/>
            <person name="Vienken K."/>
            <person name="Pain A."/>
            <person name="Freitag M."/>
            <person name="Selker E.U."/>
            <person name="Archer D.B."/>
            <person name="Penalva M.A."/>
            <person name="Oakley B.R."/>
            <person name="Momany M."/>
            <person name="Tanaka T."/>
            <person name="Kumagai T."/>
            <person name="Asai K."/>
            <person name="Machida M."/>
            <person name="Nierman W.C."/>
            <person name="Denning D.W."/>
            <person name="Caddick M.X."/>
            <person name="Hynes M."/>
            <person name="Paoletti M."/>
            <person name="Fischer R."/>
            <person name="Miller B.L."/>
            <person name="Dyer P.S."/>
            <person name="Sachs M.S."/>
            <person name="Osmani S.A."/>
            <person name="Birren B.W."/>
        </authorList>
    </citation>
    <scope>NUCLEOTIDE SEQUENCE [LARGE SCALE GENOMIC DNA]</scope>
    <source>
        <strain>FGSC A4 / ATCC 38163 / CBS 112.46 / NRRL 194 / M139</strain>
    </source>
</reference>
<reference key="4">
    <citation type="journal article" date="2009" name="Fungal Genet. Biol.">
        <title>The 2008 update of the Aspergillus nidulans genome annotation: a community effort.</title>
        <authorList>
            <person name="Wortman J.R."/>
            <person name="Gilsenan J.M."/>
            <person name="Joardar V."/>
            <person name="Deegan J."/>
            <person name="Clutterbuck J."/>
            <person name="Andersen M.R."/>
            <person name="Archer D."/>
            <person name="Bencina M."/>
            <person name="Braus G."/>
            <person name="Coutinho P."/>
            <person name="von Dohren H."/>
            <person name="Doonan J."/>
            <person name="Driessen A.J."/>
            <person name="Durek P."/>
            <person name="Espeso E."/>
            <person name="Fekete E."/>
            <person name="Flipphi M."/>
            <person name="Estrada C.G."/>
            <person name="Geysens S."/>
            <person name="Goldman G."/>
            <person name="de Groot P.W."/>
            <person name="Hansen K."/>
            <person name="Harris S.D."/>
            <person name="Heinekamp T."/>
            <person name="Helmstaedt K."/>
            <person name="Henrissat B."/>
            <person name="Hofmann G."/>
            <person name="Homan T."/>
            <person name="Horio T."/>
            <person name="Horiuchi H."/>
            <person name="James S."/>
            <person name="Jones M."/>
            <person name="Karaffa L."/>
            <person name="Karanyi Z."/>
            <person name="Kato M."/>
            <person name="Keller N."/>
            <person name="Kelly D.E."/>
            <person name="Kiel J.A."/>
            <person name="Kim J.M."/>
            <person name="van der Klei I.J."/>
            <person name="Klis F.M."/>
            <person name="Kovalchuk A."/>
            <person name="Krasevec N."/>
            <person name="Kubicek C.P."/>
            <person name="Liu B."/>
            <person name="Maccabe A."/>
            <person name="Meyer V."/>
            <person name="Mirabito P."/>
            <person name="Miskei M."/>
            <person name="Mos M."/>
            <person name="Mullins J."/>
            <person name="Nelson D.R."/>
            <person name="Nielsen J."/>
            <person name="Oakley B.R."/>
            <person name="Osmani S.A."/>
            <person name="Pakula T."/>
            <person name="Paszewski A."/>
            <person name="Paulsen I."/>
            <person name="Pilsyk S."/>
            <person name="Pocsi I."/>
            <person name="Punt P.J."/>
            <person name="Ram A.F."/>
            <person name="Ren Q."/>
            <person name="Robellet X."/>
            <person name="Robson G."/>
            <person name="Seiboth B."/>
            <person name="van Solingen P."/>
            <person name="Specht T."/>
            <person name="Sun J."/>
            <person name="Taheri-Talesh N."/>
            <person name="Takeshita N."/>
            <person name="Ussery D."/>
            <person name="vanKuyk P.A."/>
            <person name="Visser H."/>
            <person name="van de Vondervoort P.J."/>
            <person name="de Vries R.P."/>
            <person name="Walton J."/>
            <person name="Xiang X."/>
            <person name="Xiong Y."/>
            <person name="Zeng A.P."/>
            <person name="Brandt B.W."/>
            <person name="Cornell M.J."/>
            <person name="van den Hondel C.A."/>
            <person name="Visser J."/>
            <person name="Oliver S.G."/>
            <person name="Turner G."/>
        </authorList>
    </citation>
    <scope>GENOME REANNOTATION</scope>
    <source>
        <strain>FGSC A4 / ATCC 38163 / CBS 112.46 / NRRL 194 / M139</strain>
    </source>
</reference>
<reference key="5">
    <citation type="journal article" date="1996" name="Infect. Immun.">
        <title>The Cu,Zn superoxide dismutases of Aspergillus flavus, Aspergillus niger, Aspergillus nidulans, and Aspergillus terreus: purification and biochemical comparison with the Aspergillus fumigatus Cu,Zn superoxide dismutase.</title>
        <authorList>
            <person name="Holdom M.D."/>
            <person name="Hay R.J."/>
            <person name="Hamilton A.J."/>
        </authorList>
    </citation>
    <scope>PROTEIN SEQUENCE OF 2-11</scope>
</reference>
<keyword id="KW-0049">Antioxidant</keyword>
<keyword id="KW-0186">Copper</keyword>
<keyword id="KW-0963">Cytoplasm</keyword>
<keyword id="KW-0903">Direct protein sequencing</keyword>
<keyword id="KW-1015">Disulfide bond</keyword>
<keyword id="KW-0479">Metal-binding</keyword>
<keyword id="KW-0560">Oxidoreductase</keyword>
<keyword id="KW-1185">Reference proteome</keyword>
<keyword id="KW-0862">Zinc</keyword>
<feature type="initiator methionine" description="Removed" evidence="2">
    <location>
        <position position="1"/>
    </location>
</feature>
<feature type="chain" id="PRO_0000164120" description="Superoxide dismutase [Cu-Zn]">
    <location>
        <begin position="2"/>
        <end position="154"/>
    </location>
</feature>
<feature type="region of interest" description="Disordered" evidence="4">
    <location>
        <begin position="124"/>
        <end position="144"/>
    </location>
</feature>
<feature type="compositionally biased region" description="Basic and acidic residues" evidence="4">
    <location>
        <begin position="124"/>
        <end position="137"/>
    </location>
</feature>
<feature type="binding site" evidence="2">
    <location>
        <position position="47"/>
    </location>
    <ligand>
        <name>Cu cation</name>
        <dbReference type="ChEBI" id="CHEBI:23378"/>
        <note>catalytic</note>
    </ligand>
</feature>
<feature type="binding site" evidence="2">
    <location>
        <position position="49"/>
    </location>
    <ligand>
        <name>Cu cation</name>
        <dbReference type="ChEBI" id="CHEBI:23378"/>
        <note>catalytic</note>
    </ligand>
</feature>
<feature type="binding site" evidence="2">
    <location>
        <position position="64"/>
    </location>
    <ligand>
        <name>Cu cation</name>
        <dbReference type="ChEBI" id="CHEBI:23378"/>
        <note>catalytic</note>
    </ligand>
</feature>
<feature type="binding site" evidence="2">
    <location>
        <position position="64"/>
    </location>
    <ligand>
        <name>Zn(2+)</name>
        <dbReference type="ChEBI" id="CHEBI:29105"/>
        <note>structural</note>
    </ligand>
</feature>
<feature type="binding site" evidence="2">
    <location>
        <position position="72"/>
    </location>
    <ligand>
        <name>Zn(2+)</name>
        <dbReference type="ChEBI" id="CHEBI:29105"/>
        <note>structural</note>
    </ligand>
</feature>
<feature type="binding site" evidence="2">
    <location>
        <position position="81"/>
    </location>
    <ligand>
        <name>Zn(2+)</name>
        <dbReference type="ChEBI" id="CHEBI:29105"/>
        <note>structural</note>
    </ligand>
</feature>
<feature type="binding site" evidence="2">
    <location>
        <position position="84"/>
    </location>
    <ligand>
        <name>Zn(2+)</name>
        <dbReference type="ChEBI" id="CHEBI:29105"/>
        <note>structural</note>
    </ligand>
</feature>
<feature type="binding site" evidence="2">
    <location>
        <position position="121"/>
    </location>
    <ligand>
        <name>Cu cation</name>
        <dbReference type="ChEBI" id="CHEBI:23378"/>
        <note>catalytic</note>
    </ligand>
</feature>
<feature type="binding site" evidence="2">
    <location>
        <position position="144"/>
    </location>
    <ligand>
        <name>substrate</name>
    </ligand>
</feature>
<feature type="disulfide bond" evidence="2">
    <location>
        <begin position="58"/>
        <end position="147"/>
    </location>
</feature>
<feature type="sequence conflict" description="In Ref. 2; AAL38992." evidence="5" ref="2">
    <location>
        <position position="8"/>
    </location>
</feature>
<feature type="sequence conflict" description="In Ref. 2; AAL38994." evidence="5" ref="2">
    <original>N</original>
    <variation>S</variation>
    <location>
        <position position="26"/>
    </location>
</feature>
<feature type="sequence conflict" description="In Ref. 2; AAL38994." evidence="5" ref="2">
    <original>V</original>
    <variation>A</variation>
    <location>
        <position position="119"/>
    </location>
</feature>
<protein>
    <recommendedName>
        <fullName>Superoxide dismutase [Cu-Zn]</fullName>
        <ecNumber evidence="3">1.15.1.1</ecNumber>
    </recommendedName>
</protein>
<evidence type="ECO:0000250" key="1">
    <source>
        <dbReference type="UniProtKB" id="P00442"/>
    </source>
</evidence>
<evidence type="ECO:0000250" key="2">
    <source>
        <dbReference type="UniProtKB" id="P00445"/>
    </source>
</evidence>
<evidence type="ECO:0000250" key="3">
    <source>
        <dbReference type="UniProtKB" id="P85978"/>
    </source>
</evidence>
<evidence type="ECO:0000256" key="4">
    <source>
        <dbReference type="SAM" id="MobiDB-lite"/>
    </source>
</evidence>
<evidence type="ECO:0000305" key="5"/>
<accession>Q9HEY7</accession>
<accession>C8VUL3</accession>
<accession>Q5BGT9</accession>
<accession>Q8X1S5</accession>
<accession>Q8X1S7</accession>
<sequence>MVKAVAVLRGDSKVSGTVTFEQADENSNTTVSWNITGNDPNAERGFHIHQFGDNTNGCTSAGPHFNPFGKTHGAPEDEVRHVGDLGNFKTDAEGNSKGSKTDKLIKLIGAESVLGRTLVVHAGTDDLGRGDSEESKKTGNAGARPACGVIGIAA</sequence>
<comment type="function">
    <text evidence="1">Destroys radicals which are normally produced within the cells and which are toxic to biological systems.</text>
</comment>
<comment type="catalytic activity">
    <reaction evidence="3">
        <text>2 superoxide + 2 H(+) = H2O2 + O2</text>
        <dbReference type="Rhea" id="RHEA:20696"/>
        <dbReference type="ChEBI" id="CHEBI:15378"/>
        <dbReference type="ChEBI" id="CHEBI:15379"/>
        <dbReference type="ChEBI" id="CHEBI:16240"/>
        <dbReference type="ChEBI" id="CHEBI:18421"/>
        <dbReference type="EC" id="1.15.1.1"/>
    </reaction>
</comment>
<comment type="cofactor">
    <cofactor evidence="2">
        <name>Cu cation</name>
        <dbReference type="ChEBI" id="CHEBI:23378"/>
    </cofactor>
    <text evidence="2">Binds 1 copper ion per subunit.</text>
</comment>
<comment type="cofactor">
    <cofactor evidence="2">
        <name>Zn(2+)</name>
        <dbReference type="ChEBI" id="CHEBI:29105"/>
    </cofactor>
    <text evidence="2">Binds 1 zinc ion per subunit.</text>
</comment>
<comment type="subunit">
    <text evidence="3">Homodimer.</text>
</comment>
<comment type="subcellular location">
    <subcellularLocation>
        <location evidence="2">Cytoplasm</location>
    </subcellularLocation>
</comment>
<comment type="similarity">
    <text evidence="5">Belongs to the Cu-Zn superoxide dismutase family.</text>
</comment>
<comment type="sequence caution" evidence="5">
    <conflict type="erroneous gene model prediction">
        <sequence resource="EMBL-CDS" id="EAA66114"/>
    </conflict>
</comment>
<organism>
    <name type="scientific">Emericella nidulans (strain FGSC A4 / ATCC 38163 / CBS 112.46 / NRRL 194 / M139)</name>
    <name type="common">Aspergillus nidulans</name>
    <dbReference type="NCBI Taxonomy" id="227321"/>
    <lineage>
        <taxon>Eukaryota</taxon>
        <taxon>Fungi</taxon>
        <taxon>Dikarya</taxon>
        <taxon>Ascomycota</taxon>
        <taxon>Pezizomycotina</taxon>
        <taxon>Eurotiomycetes</taxon>
        <taxon>Eurotiomycetidae</taxon>
        <taxon>Eurotiales</taxon>
        <taxon>Aspergillaceae</taxon>
        <taxon>Aspergillus</taxon>
        <taxon>Aspergillus subgen. Nidulantes</taxon>
    </lineage>
</organism>
<name>SODC_EMENI</name>
<proteinExistence type="evidence at protein level"/>